<proteinExistence type="evidence at protein level"/>
<comment type="function">
    <text evidence="7 8 9 10 11 12">Lytic polysaccharide monooxygenase (LPMO) that depolymerizes crystalline and amorphous polysaccharides via the oxidation of scissile alpha- or beta-(1-4)-glycosidic bonds, yielding C1 and C4 oxidation products (PubMed:26285758, PubMed:28110665, PubMed:28900033, PubMed:30238672). Catalysis by LPMOs requires the reduction of the active-site copper from Cu(II) to Cu(I) by a reducing agent and H(2)O(2) or O(2) as a cosubstrate (PubMed:28900033, PubMed:32414932, PubMed:34597668). Produces both neutral and oxidized cello-oligosaccharides from cellulose (PubMed:26285758, PubMed:28900033). Also acts on soluble cello-oligosaccharides as short as a tetramer (PubMed:26285758). The oxidative activity displays a synergistic effect capable of boosting endoglucanase activity, and thereby substrate depolymerization of soy cellulose by 27% (PubMed:28110665).</text>
</comment>
<comment type="catalytic activity">
    <reaction evidence="7 8 9 10 11 12">
        <text>[(1-&gt;4)-beta-D-glucosyl]n+m + reduced acceptor + O2 = 4-dehydro-beta-D-glucosyl-[(1-&gt;4)-beta-D-glucosyl]n-1 + [(1-&gt;4)-beta-D-glucosyl]m + acceptor + H2O.</text>
        <dbReference type="EC" id="1.14.99.56"/>
    </reaction>
</comment>
<comment type="cofactor">
    <cofactor evidence="9">
        <name>Cu(2+)</name>
        <dbReference type="ChEBI" id="CHEBI:29036"/>
    </cofactor>
    <text evidence="9">Binds 1 copper ion per subunit.</text>
</comment>
<comment type="subcellular location">
    <subcellularLocation>
        <location evidence="16">Secreted</location>
    </subcellularLocation>
</comment>
<comment type="domain">
    <text evidence="9 10">Has a modular structure: an endo-beta-1,4-glucanase catalytic module at the N-terminus, a linker rich in serines and threonines, and a C-terminal carbohydrate-binding module (CBM) (PubMed:28900033). The linker forms an integral part of the catalytic domain structure, covering a hydrophobic patch on the catalytic module (PubMed:28900033). The CBM domain is essential for binding to and subsequent oxidative degradation of polysaccharide substrate (PubMed:28900033, PubMed:30238672).</text>
</comment>
<comment type="PTM">
    <text evidence="10">N-glycosylation at position Asn-158 is important to determine C1/C4-oxidation ratios.</text>
</comment>
<comment type="biotechnology">
    <text evidence="8">Lignocellulose is the most abundant polymeric composite on Earth and is a recalcitrant but promising renewable substrate for industrial biotechnology applications. Together with cellobiose dehydrogenases (CDHs) an enzymatic system capable of oxidative cellulose cleavage is formed, which increases the efficiency of cellulases and put LPMOs at focus of biofuel research.</text>
</comment>
<comment type="similarity">
    <text evidence="15">Belongs to the polysaccharide monooxygenase AA9 family.</text>
</comment>
<organism>
    <name type="scientific">Hypocrea jecorina (strain QM6a)</name>
    <name type="common">Trichoderma reesei</name>
    <dbReference type="NCBI Taxonomy" id="431241"/>
    <lineage>
        <taxon>Eukaryota</taxon>
        <taxon>Fungi</taxon>
        <taxon>Dikarya</taxon>
        <taxon>Ascomycota</taxon>
        <taxon>Pezizomycotina</taxon>
        <taxon>Sordariomycetes</taxon>
        <taxon>Hypocreomycetidae</taxon>
        <taxon>Hypocreales</taxon>
        <taxon>Hypocreaceae</taxon>
        <taxon>Trichoderma</taxon>
    </lineage>
</organism>
<protein>
    <recommendedName>
        <fullName evidence="13">AA9 family lytic polysaccharide monooxygenase cel61A</fullName>
        <shortName evidence="13">LPMO9 cel61A</shortName>
        <ecNumber evidence="7 8 9 10 11 12">1.14.99.56</ecNumber>
    </recommendedName>
    <alternativeName>
        <fullName evidence="13">Cellulase-61A</fullName>
        <shortName evidence="13">Cel61A</shortName>
    </alternativeName>
    <alternativeName>
        <fullName evidence="15">Endo-beta-1,4-glucanase cel61A</fullName>
        <shortName evidence="15">Endoglucanase cel61A</shortName>
    </alternativeName>
    <alternativeName>
        <fullName evidence="15">Glycosyl hydrolase 61 family protein cel61A</fullName>
    </alternativeName>
</protein>
<gene>
    <name evidence="14" type="primary">LPMO9A</name>
    <name evidence="13" type="synonym">cel61a</name>
    <name type="ORF">TRIREDRAFT_73643</name>
</gene>
<evidence type="ECO:0000250" key="1">
    <source>
        <dbReference type="UniProtKB" id="Q1K8B6"/>
    </source>
</evidence>
<evidence type="ECO:0000250" key="2">
    <source>
        <dbReference type="UniProtKB" id="Q7Z9M7"/>
    </source>
</evidence>
<evidence type="ECO:0000255" key="3"/>
<evidence type="ECO:0000255" key="4">
    <source>
        <dbReference type="PROSITE-ProRule" id="PRU00498"/>
    </source>
</evidence>
<evidence type="ECO:0000255" key="5">
    <source>
        <dbReference type="PROSITE-ProRule" id="PRU00597"/>
    </source>
</evidence>
<evidence type="ECO:0000256" key="6">
    <source>
        <dbReference type="SAM" id="MobiDB-lite"/>
    </source>
</evidence>
<evidence type="ECO:0000269" key="7">
    <source>
    </source>
</evidence>
<evidence type="ECO:0000269" key="8">
    <source>
    </source>
</evidence>
<evidence type="ECO:0000269" key="9">
    <source>
    </source>
</evidence>
<evidence type="ECO:0000269" key="10">
    <source>
    </source>
</evidence>
<evidence type="ECO:0000269" key="11">
    <source>
    </source>
</evidence>
<evidence type="ECO:0000269" key="12">
    <source>
    </source>
</evidence>
<evidence type="ECO:0000303" key="13">
    <source>
    </source>
</evidence>
<evidence type="ECO:0000303" key="14">
    <source>
    </source>
</evidence>
<evidence type="ECO:0000305" key="15"/>
<evidence type="ECO:0000305" key="16">
    <source>
    </source>
</evidence>
<evidence type="ECO:0007744" key="17">
    <source>
        <dbReference type="PDB" id="5O2W"/>
    </source>
</evidence>
<evidence type="ECO:0007744" key="18">
    <source>
        <dbReference type="PDB" id="5O2X"/>
    </source>
</evidence>
<evidence type="ECO:0007829" key="19">
    <source>
        <dbReference type="PDB" id="5O2X"/>
    </source>
</evidence>
<feature type="signal peptide" evidence="3">
    <location>
        <begin position="1"/>
        <end position="21"/>
    </location>
</feature>
<feature type="chain" id="PRO_5003408469" description="AA9 family lytic polysaccharide monooxygenase cel61A">
    <location>
        <begin position="22"/>
        <end position="344"/>
    </location>
</feature>
<feature type="domain" description="CBM1" evidence="5">
    <location>
        <begin position="307"/>
        <end position="343"/>
    </location>
</feature>
<feature type="region of interest" description="Disordered" evidence="6">
    <location>
        <begin position="262"/>
        <end position="310"/>
    </location>
</feature>
<feature type="compositionally biased region" description="Low complexity" evidence="6">
    <location>
        <begin position="275"/>
        <end position="310"/>
    </location>
</feature>
<feature type="binding site" evidence="9 17 18">
    <location>
        <position position="22"/>
    </location>
    <ligand>
        <name>Cu(2+)</name>
        <dbReference type="ChEBI" id="CHEBI:29036"/>
        <note>catalytic</note>
    </ligand>
</feature>
<feature type="binding site" evidence="9 17 18">
    <location>
        <position position="107"/>
    </location>
    <ligand>
        <name>Cu(2+)</name>
        <dbReference type="ChEBI" id="CHEBI:29036"/>
        <note>catalytic</note>
    </ligand>
</feature>
<feature type="binding site" evidence="1">
    <location>
        <position position="184"/>
    </location>
    <ligand>
        <name>O2</name>
        <dbReference type="ChEBI" id="CHEBI:15379"/>
    </ligand>
</feature>
<feature type="binding site" evidence="1">
    <location>
        <position position="193"/>
    </location>
    <ligand>
        <name>O2</name>
        <dbReference type="ChEBI" id="CHEBI:15379"/>
    </ligand>
</feature>
<feature type="binding site" evidence="2">
    <location>
        <position position="195"/>
    </location>
    <ligand>
        <name>Cu(2+)</name>
        <dbReference type="ChEBI" id="CHEBI:29036"/>
        <note>catalytic</note>
    </ligand>
</feature>
<feature type="glycosylation site" description="N-linked (GlcNAc...) asparagine" evidence="4">
    <location>
        <position position="80"/>
    </location>
</feature>
<feature type="glycosylation site" description="N-linked (GlcNAc...) asparagine" evidence="4 10">
    <location>
        <position position="158"/>
    </location>
</feature>
<feature type="disulfide bond" evidence="9 17 18">
    <location>
        <begin position="77"/>
        <end position="198"/>
    </location>
</feature>
<feature type="disulfide bond" evidence="9 17 18">
    <location>
        <begin position="118"/>
        <end position="122"/>
    </location>
</feature>
<feature type="mutagenesis site" description="Leads to lower C4 oxidation and higher C1-oxidation." evidence="10">
    <original>Y</original>
    <variation>A</variation>
    <variation>F</variation>
    <variation>W</variation>
    <location>
        <position position="45"/>
    </location>
</feature>
<feature type="mutagenesis site" description="Leads to lower C4 oxidation and higher C1-oxidation." evidence="10">
    <original>F</original>
    <variation>A</variation>
    <variation>F</variation>
    <variation>W</variation>
    <location>
        <position position="64"/>
    </location>
</feature>
<feature type="mutagenesis site" description="Leads to lower C4 oxidation and higher C1-oxidation." evidence="10">
    <original>W</original>
    <variation>A</variation>
    <variation>F</variation>
    <variation>W</variation>
    <location>
        <position position="105"/>
    </location>
</feature>
<feature type="mutagenesis site" description="Leads to lower C4 oxidation and higher C1-oxidation." evidence="10">
    <original>N</original>
    <variation>A</variation>
    <variation>Q</variation>
    <location>
        <position position="158"/>
    </location>
</feature>
<feature type="mutagenesis site" description="Bind copper more weakly." evidence="12">
    <original>Y</original>
    <variation>F</variation>
    <location>
        <position position="195"/>
    </location>
</feature>
<feature type="mutagenesis site" description="Leads to lower C4 oxidation and higher C1-oxidation." evidence="10">
    <original>Y</original>
    <variation>A</variation>
    <variation>F</variation>
    <variation>W</variation>
    <location>
        <position position="232"/>
    </location>
</feature>
<feature type="strand" evidence="19">
    <location>
        <begin position="24"/>
        <end position="30"/>
    </location>
</feature>
<feature type="strand" evidence="19">
    <location>
        <begin position="33"/>
        <end position="36"/>
    </location>
</feature>
<feature type="turn" evidence="19">
    <location>
        <begin position="40"/>
        <end position="42"/>
    </location>
</feature>
<feature type="helix" evidence="19">
    <location>
        <begin position="43"/>
        <end position="45"/>
    </location>
</feature>
<feature type="strand" evidence="19">
    <location>
        <begin position="46"/>
        <end position="48"/>
    </location>
</feature>
<feature type="helix" evidence="19">
    <location>
        <begin position="67"/>
        <end position="69"/>
    </location>
</feature>
<feature type="helix" evidence="19">
    <location>
        <begin position="74"/>
        <end position="77"/>
    </location>
</feature>
<feature type="strand" evidence="19">
    <location>
        <begin position="85"/>
        <end position="91"/>
    </location>
</feature>
<feature type="strand" evidence="19">
    <location>
        <begin position="95"/>
        <end position="104"/>
    </location>
</feature>
<feature type="strand" evidence="19">
    <location>
        <begin position="111"/>
        <end position="117"/>
    </location>
</feature>
<feature type="turn" evidence="19">
    <location>
        <begin position="122"/>
        <end position="124"/>
    </location>
</feature>
<feature type="helix" evidence="19">
    <location>
        <begin position="127"/>
        <end position="129"/>
    </location>
</feature>
<feature type="strand" evidence="19">
    <location>
        <begin position="131"/>
        <end position="138"/>
    </location>
</feature>
<feature type="strand" evidence="19">
    <location>
        <begin position="140"/>
        <end position="142"/>
    </location>
</feature>
<feature type="helix" evidence="19">
    <location>
        <begin position="150"/>
        <end position="156"/>
    </location>
</feature>
<feature type="strand" evidence="19">
    <location>
        <begin position="159"/>
        <end position="164"/>
    </location>
</feature>
<feature type="strand" evidence="19">
    <location>
        <begin position="171"/>
        <end position="182"/>
    </location>
</feature>
<feature type="turn" evidence="19">
    <location>
        <begin position="184"/>
        <end position="187"/>
    </location>
</feature>
<feature type="strand" evidence="19">
    <location>
        <begin position="193"/>
        <end position="204"/>
    </location>
</feature>
<feature type="helix" evidence="19">
    <location>
        <begin position="216"/>
        <end position="218"/>
    </location>
</feature>
<feature type="turn" evidence="19">
    <location>
        <begin position="225"/>
        <end position="227"/>
    </location>
</feature>
<feature type="strand" evidence="19">
    <location>
        <begin position="232"/>
        <end position="235"/>
    </location>
</feature>
<feature type="strand" evidence="19">
    <location>
        <begin position="241"/>
        <end position="243"/>
    </location>
</feature>
<feature type="strand" evidence="19">
    <location>
        <begin position="261"/>
        <end position="263"/>
    </location>
</feature>
<keyword id="KW-0002">3D-structure</keyword>
<keyword id="KW-0119">Carbohydrate metabolism</keyword>
<keyword id="KW-0136">Cellulose degradation</keyword>
<keyword id="KW-0186">Copper</keyword>
<keyword id="KW-1015">Disulfide bond</keyword>
<keyword id="KW-0325">Glycoprotein</keyword>
<keyword id="KW-0479">Metal-binding</keyword>
<keyword id="KW-0503">Monooxygenase</keyword>
<keyword id="KW-0560">Oxidoreductase</keyword>
<keyword id="KW-0624">Polysaccharide degradation</keyword>
<keyword id="KW-1185">Reference proteome</keyword>
<keyword id="KW-0964">Secreted</keyword>
<keyword id="KW-0732">Signal</keyword>
<accession>G0R6T8</accession>
<name>LP9A_HYPJQ</name>
<reference key="1">
    <citation type="journal article" date="2008" name="Nat. Biotechnol.">
        <title>Genome sequencing and analysis of the biomass-degrading fungus Trichoderma reesei (syn. Hypocrea jecorina).</title>
        <authorList>
            <person name="Martinez D."/>
            <person name="Berka R.M."/>
            <person name="Henrissat B."/>
            <person name="Saloheimo M."/>
            <person name="Arvas M."/>
            <person name="Baker S.E."/>
            <person name="Chapman J."/>
            <person name="Chertkov O."/>
            <person name="Coutinho P.M."/>
            <person name="Cullen D."/>
            <person name="Danchin E.G."/>
            <person name="Grigoriev I.V."/>
            <person name="Harris P."/>
            <person name="Jackson M."/>
            <person name="Kubicek C.P."/>
            <person name="Han C.S."/>
            <person name="Ho I."/>
            <person name="Larrondo L.F."/>
            <person name="de Leon A.L."/>
            <person name="Magnuson J.K."/>
            <person name="Merino S."/>
            <person name="Misra M."/>
            <person name="Nelson B."/>
            <person name="Putnam N."/>
            <person name="Robbertse B."/>
            <person name="Salamov A.A."/>
            <person name="Schmoll M."/>
            <person name="Terry A."/>
            <person name="Thayer N."/>
            <person name="Westerholm-Parvinen A."/>
            <person name="Schoch C.L."/>
            <person name="Yao J."/>
            <person name="Barabote R."/>
            <person name="Nelson M.A."/>
            <person name="Detter C."/>
            <person name="Bruce D."/>
            <person name="Kuske C.R."/>
            <person name="Xie G."/>
            <person name="Richardson P."/>
            <person name="Rokhsar D.S."/>
            <person name="Lucas S.M."/>
            <person name="Rubin E.M."/>
            <person name="Dunn-Coleman N."/>
            <person name="Ward M."/>
            <person name="Brettin T.S."/>
        </authorList>
    </citation>
    <scope>NUCLEOTIDE SEQUENCE [LARGE SCALE GENOMIC DNA]</scope>
    <source>
        <strain>QM6a</strain>
    </source>
</reference>
<reference key="2">
    <citation type="journal article" date="2015" name="Mol. Biotechnol.">
        <title>Recombinant expression of Trichoderma reesei Cel61A in Pichia pastoris: optimizing yield and N-terminal processing.</title>
        <authorList>
            <person name="Tanghe M."/>
            <person name="Danneels B."/>
            <person name="Camattari A."/>
            <person name="Glieder A."/>
            <person name="Vandenberghe I."/>
            <person name="Devreese B."/>
            <person name="Stals I."/>
            <person name="Desmet T."/>
        </authorList>
    </citation>
    <scope>FUNCTION</scope>
    <scope>CATALYTIC ACTIVITY</scope>
    <scope>SUBCELLULAR LOCATION</scope>
</reference>
<reference key="3">
    <citation type="journal article" date="2017" name="Enzyme Microb. Technol.">
        <title>Oxidative cleavage and hydrolytic boosting of cellulose in soybean spent flakes by Trichoderma reesei Cel61A lytic polysaccharide monooxygenase.</title>
        <authorList>
            <person name="Pierce B.C."/>
            <person name="Agger J.W."/>
            <person name="Wichmann J."/>
            <person name="Meyer A.S."/>
        </authorList>
    </citation>
    <scope>FUNCTION</scope>
    <scope>CATALYTIC ACTIVITY</scope>
    <scope>BIOTECHNOLOGY</scope>
</reference>
<reference key="4">
    <citation type="journal article" date="2019" name="Biotechnol. J.">
        <title>Structural features on the substrate-sinding surface of fungal lytic polysaccharide monooxygenases determine their oxidative regioselectivity.</title>
        <authorList>
            <person name="Danneels B."/>
            <person name="Tanghe M."/>
            <person name="Desmet T."/>
        </authorList>
    </citation>
    <scope>FUNCTION</scope>
    <scope>CATALYTIC ACTIVITY</scope>
    <scope>DOMAIN</scope>
    <scope>GLYCOSYLATION AT ASN-158</scope>
    <scope>MUTAGENESIS OF TYR-45; PHE-64; TRP-105; ASN-158 AND TYR-232</scope>
</reference>
<reference key="5">
    <citation type="journal article" date="2020" name="Proc. Natl. Acad. Sci. U.S.A.">
        <title>Kinetic analysis of amino acid radicals formed in H2O2-driven CuI LPMO reoxidation implicates dominant homolytic reactivity.</title>
        <authorList>
            <person name="Jones S.M."/>
            <person name="Transue W.J."/>
            <person name="Meier K.K."/>
            <person name="Kelemen B."/>
            <person name="Solomon E.I."/>
        </authorList>
    </citation>
    <scope>FUNCTION</scope>
    <scope>CATALYTIC ACTIVITY</scope>
    <scope>BIOPHYSICOCHEMICAL PROPERTIES</scope>
</reference>
<reference key="6">
    <citation type="journal article" date="2021" name="J. Biol. Chem.">
        <title>Kinetics of H2O2-driven catalysis by a lytic polysaccharide monooxygenase from the fungus Trichoderma reesei.</title>
        <authorList>
            <person name="Kuusk S."/>
            <person name="Vaeljamaee P."/>
        </authorList>
    </citation>
    <scope>FUNCTION</scope>
    <scope>CATALYTIC ACTIVITY</scope>
    <scope>MUTAGENESIS OF TYR-195</scope>
</reference>
<reference evidence="17 18" key="7">
    <citation type="journal article" date="2017" name="J. Biol. Chem.">
        <title>High-resolution structure of a lytic polysaccharide monooxygenase from &lt;i&gt;Hypocrea jecorina&lt;/i&gt; reveals a predicted linker as an integral part of the catalytic domain.</title>
        <authorList>
            <person name="Hansson H."/>
            <person name="Karkehabadi S."/>
            <person name="Mikkelsen N."/>
            <person name="Douglas N.R."/>
            <person name="Kim S."/>
            <person name="Lam A."/>
            <person name="Kaper T."/>
            <person name="Kelemen B."/>
            <person name="Meier K.K."/>
            <person name="Jones S.M."/>
            <person name="Solomon E.I."/>
            <person name="Sandgren M."/>
        </authorList>
    </citation>
    <scope>X-RAY CRYSTALLOGRAPHY (0.95 ANGSTROMS) OF 23-269 IN COMPLEX WITH COPPER</scope>
    <scope>DISULFIDE BONDS</scope>
    <scope>COFACTOR</scope>
    <scope>DOMAIN</scope>
    <scope>FUNCTION</scope>
    <scope>CATALYTIC ACTIVITY</scope>
</reference>
<dbReference type="EC" id="1.14.99.56" evidence="7 8 9 10 11 12"/>
<dbReference type="EMBL" id="GL985056">
    <property type="protein sequence ID" value="EGR52697.1"/>
    <property type="molecule type" value="Genomic_DNA"/>
</dbReference>
<dbReference type="RefSeq" id="XP_006961567.1">
    <property type="nucleotide sequence ID" value="XM_006961505.1"/>
</dbReference>
<dbReference type="PDB" id="5O2W">
    <property type="method" value="X-ray"/>
    <property type="resolution" value="2.00 A"/>
    <property type="chains" value="A=23-269"/>
</dbReference>
<dbReference type="PDB" id="5O2X">
    <property type="method" value="X-ray"/>
    <property type="resolution" value="0.95 A"/>
    <property type="chains" value="A=23-269"/>
</dbReference>
<dbReference type="PDBsum" id="5O2W"/>
<dbReference type="PDBsum" id="5O2X"/>
<dbReference type="SMR" id="G0R6T8"/>
<dbReference type="STRING" id="431241.G0R6T8"/>
<dbReference type="EnsemblFungi" id="EGR52697">
    <property type="protein sequence ID" value="EGR52697"/>
    <property type="gene ID" value="TRIREDRAFT_73643"/>
</dbReference>
<dbReference type="GeneID" id="18488225"/>
<dbReference type="KEGG" id="tre:TRIREDRAFT_73643"/>
<dbReference type="VEuPathDB" id="FungiDB:TRIREDRAFT_73643"/>
<dbReference type="eggNOG" id="ENOG502RY3D">
    <property type="taxonomic scope" value="Eukaryota"/>
</dbReference>
<dbReference type="HOGENOM" id="CLU_031730_1_0_1"/>
<dbReference type="OrthoDB" id="4849160at2759"/>
<dbReference type="BRENDA" id="1.14.99.54">
    <property type="organism ID" value="6451"/>
</dbReference>
<dbReference type="Proteomes" id="UP000008984">
    <property type="component" value="Unassembled WGS sequence"/>
</dbReference>
<dbReference type="GO" id="GO:0005576">
    <property type="term" value="C:extracellular region"/>
    <property type="evidence" value="ECO:0007669"/>
    <property type="project" value="UniProtKB-SubCell"/>
</dbReference>
<dbReference type="GO" id="GO:0030248">
    <property type="term" value="F:cellulose binding"/>
    <property type="evidence" value="ECO:0007669"/>
    <property type="project" value="InterPro"/>
</dbReference>
<dbReference type="GO" id="GO:0046872">
    <property type="term" value="F:metal ion binding"/>
    <property type="evidence" value="ECO:0007669"/>
    <property type="project" value="UniProtKB-KW"/>
</dbReference>
<dbReference type="GO" id="GO:0004497">
    <property type="term" value="F:monooxygenase activity"/>
    <property type="evidence" value="ECO:0007669"/>
    <property type="project" value="UniProtKB-KW"/>
</dbReference>
<dbReference type="GO" id="GO:0030245">
    <property type="term" value="P:cellulose catabolic process"/>
    <property type="evidence" value="ECO:0007669"/>
    <property type="project" value="UniProtKB-KW"/>
</dbReference>
<dbReference type="CDD" id="cd21175">
    <property type="entry name" value="LPMO_AA9"/>
    <property type="match status" value="1"/>
</dbReference>
<dbReference type="FunFam" id="2.70.50.70:FF:000001">
    <property type="entry name" value="Glycoside hydrolase family 61"/>
    <property type="match status" value="1"/>
</dbReference>
<dbReference type="Gene3D" id="2.70.50.70">
    <property type="match status" value="1"/>
</dbReference>
<dbReference type="InterPro" id="IPR049892">
    <property type="entry name" value="AA9"/>
</dbReference>
<dbReference type="InterPro" id="IPR005103">
    <property type="entry name" value="AA9_LPMO"/>
</dbReference>
<dbReference type="InterPro" id="IPR035971">
    <property type="entry name" value="CBD_sf"/>
</dbReference>
<dbReference type="InterPro" id="IPR000254">
    <property type="entry name" value="Cellulose-bd_dom_fun"/>
</dbReference>
<dbReference type="PANTHER" id="PTHR33353:SF36">
    <property type="entry name" value="ENDO-BETA-1,4-GLUCANASE D"/>
    <property type="match status" value="1"/>
</dbReference>
<dbReference type="PANTHER" id="PTHR33353">
    <property type="entry name" value="PUTATIVE (AFU_ORTHOLOGUE AFUA_1G12560)-RELATED"/>
    <property type="match status" value="1"/>
</dbReference>
<dbReference type="Pfam" id="PF03443">
    <property type="entry name" value="AA9"/>
    <property type="match status" value="1"/>
</dbReference>
<dbReference type="Pfam" id="PF00734">
    <property type="entry name" value="CBM_1"/>
    <property type="match status" value="1"/>
</dbReference>
<dbReference type="SMART" id="SM00236">
    <property type="entry name" value="fCBD"/>
    <property type="match status" value="1"/>
</dbReference>
<dbReference type="SUPFAM" id="SSF57180">
    <property type="entry name" value="Cellulose-binding domain"/>
    <property type="match status" value="1"/>
</dbReference>
<dbReference type="PROSITE" id="PS00562">
    <property type="entry name" value="CBM1_1"/>
    <property type="match status" value="1"/>
</dbReference>
<dbReference type="PROSITE" id="PS51164">
    <property type="entry name" value="CBM1_2"/>
    <property type="match status" value="1"/>
</dbReference>
<sequence>MIQKLSNLLVTALAVATGVVGHGHINDIVINGVWYQAYDPTTFPYESNPPIVVGWTAADLDNGFVSPDAYQNPDIICHKNATNAKGHASVKAGDTILFQWVPVPWPHPGPIVDYLANCNGDCETVDKTTLEFFKIDGVGLLSGGDPGTWASDVLISNNNTWVVKIPDNLAPGNYVLRHEIIALHSAGQANGAQNYPQCFNIAVSGSGSLQPSGVLGTDLYHATDPGVLINIYTSPLNYIIPGPTVVSGLPTSVAQGSSAATATASATVPGGGSGPTSRTTTTARTTQASSRPSSTPPATTSAPAGGPTQTLYGQCGGSGYSGPTRCAPPATCSTLNPYYAQCLN</sequence>